<reference key="1">
    <citation type="journal article" date="2009" name="Vaccine">
        <title>Whole genome sequence analysis of Mycobacterium bovis bacillus Calmette-Guerin (BCG) Tokyo 172: a comparative study of BCG vaccine substrains.</title>
        <authorList>
            <person name="Seki M."/>
            <person name="Honda I."/>
            <person name="Fujita I."/>
            <person name="Yano I."/>
            <person name="Yamamoto S."/>
            <person name="Koyama A."/>
        </authorList>
    </citation>
    <scope>NUCLEOTIDE SEQUENCE [LARGE SCALE GENOMIC DNA]</scope>
    <source>
        <strain>BCG / Tokyo 172 / ATCC 35737 / TMC 1019</strain>
    </source>
</reference>
<dbReference type="EC" id="2.3.3.9" evidence="1"/>
<dbReference type="EMBL" id="AP010918">
    <property type="protein sequence ID" value="BAH26143.1"/>
    <property type="molecule type" value="Genomic_DNA"/>
</dbReference>
<dbReference type="RefSeq" id="WP_003409271.1">
    <property type="nucleotide sequence ID" value="NZ_CP014566.1"/>
</dbReference>
<dbReference type="SMR" id="C1APB4"/>
<dbReference type="KEGG" id="mbt:JTY_1856"/>
<dbReference type="HOGENOM" id="CLU_028446_1_0_11"/>
<dbReference type="UniPathway" id="UPA00703">
    <property type="reaction ID" value="UER00720"/>
</dbReference>
<dbReference type="GO" id="GO:0005829">
    <property type="term" value="C:cytosol"/>
    <property type="evidence" value="ECO:0007669"/>
    <property type="project" value="TreeGrafter"/>
</dbReference>
<dbReference type="GO" id="GO:0000287">
    <property type="term" value="F:magnesium ion binding"/>
    <property type="evidence" value="ECO:0007669"/>
    <property type="project" value="TreeGrafter"/>
</dbReference>
<dbReference type="GO" id="GO:0004474">
    <property type="term" value="F:malate synthase activity"/>
    <property type="evidence" value="ECO:0007669"/>
    <property type="project" value="UniProtKB-UniRule"/>
</dbReference>
<dbReference type="GO" id="GO:0009436">
    <property type="term" value="P:glyoxylate catabolic process"/>
    <property type="evidence" value="ECO:0007669"/>
    <property type="project" value="TreeGrafter"/>
</dbReference>
<dbReference type="GO" id="GO:0006097">
    <property type="term" value="P:glyoxylate cycle"/>
    <property type="evidence" value="ECO:0007669"/>
    <property type="project" value="UniProtKB-UniRule"/>
</dbReference>
<dbReference type="GO" id="GO:0006099">
    <property type="term" value="P:tricarboxylic acid cycle"/>
    <property type="evidence" value="ECO:0007669"/>
    <property type="project" value="UniProtKB-KW"/>
</dbReference>
<dbReference type="CDD" id="cd00728">
    <property type="entry name" value="malate_synt_G"/>
    <property type="match status" value="1"/>
</dbReference>
<dbReference type="FunFam" id="3.20.20.360:FF:000002">
    <property type="entry name" value="Malate synthase G"/>
    <property type="match status" value="1"/>
</dbReference>
<dbReference type="Gene3D" id="3.20.20.360">
    <property type="entry name" value="Malate synthase, domain 3"/>
    <property type="match status" value="2"/>
</dbReference>
<dbReference type="Gene3D" id="1.20.1220.12">
    <property type="entry name" value="Malate synthase, domain III"/>
    <property type="match status" value="1"/>
</dbReference>
<dbReference type="HAMAP" id="MF_00641">
    <property type="entry name" value="Malate_synth_G"/>
    <property type="match status" value="1"/>
</dbReference>
<dbReference type="InterPro" id="IPR044856">
    <property type="entry name" value="Malate_synth_C_sf"/>
</dbReference>
<dbReference type="InterPro" id="IPR011076">
    <property type="entry name" value="Malate_synth_sf"/>
</dbReference>
<dbReference type="InterPro" id="IPR001465">
    <property type="entry name" value="Malate_synthase_TIM"/>
</dbReference>
<dbReference type="InterPro" id="IPR006253">
    <property type="entry name" value="Malate_synthG"/>
</dbReference>
<dbReference type="InterPro" id="IPR048355">
    <property type="entry name" value="MS_C"/>
</dbReference>
<dbReference type="InterPro" id="IPR048356">
    <property type="entry name" value="MS_N"/>
</dbReference>
<dbReference type="InterPro" id="IPR046363">
    <property type="entry name" value="MS_N_TIM-barrel_dom"/>
</dbReference>
<dbReference type="InterPro" id="IPR048357">
    <property type="entry name" value="MSG_insertion"/>
</dbReference>
<dbReference type="NCBIfam" id="TIGR01345">
    <property type="entry name" value="malate_syn_G"/>
    <property type="match status" value="1"/>
</dbReference>
<dbReference type="NCBIfam" id="NF002825">
    <property type="entry name" value="PRK02999.1"/>
    <property type="match status" value="1"/>
</dbReference>
<dbReference type="PANTHER" id="PTHR42739">
    <property type="entry name" value="MALATE SYNTHASE G"/>
    <property type="match status" value="1"/>
</dbReference>
<dbReference type="PANTHER" id="PTHR42739:SF1">
    <property type="entry name" value="MALATE SYNTHASE G"/>
    <property type="match status" value="1"/>
</dbReference>
<dbReference type="Pfam" id="PF20659">
    <property type="entry name" value="MS_C"/>
    <property type="match status" value="1"/>
</dbReference>
<dbReference type="Pfam" id="PF20656">
    <property type="entry name" value="MS_N"/>
    <property type="match status" value="1"/>
</dbReference>
<dbReference type="Pfam" id="PF01274">
    <property type="entry name" value="MS_TIM-barrel"/>
    <property type="match status" value="1"/>
</dbReference>
<dbReference type="Pfam" id="PF20658">
    <property type="entry name" value="MSG_insertion"/>
    <property type="match status" value="1"/>
</dbReference>
<dbReference type="SUPFAM" id="SSF51645">
    <property type="entry name" value="Malate synthase G"/>
    <property type="match status" value="1"/>
</dbReference>
<proteinExistence type="inferred from homology"/>
<name>MASZ_MYCBT</name>
<gene>
    <name evidence="1" type="primary">glcB</name>
    <name type="ordered locus">JTY_1856</name>
</gene>
<comment type="function">
    <text evidence="1">Involved in the glycolate utilization. Catalyzes the condensation and subsequent hydrolysis of acetyl-coenzyme A (acetyl-CoA) and glyoxylate to form malate and CoA.</text>
</comment>
<comment type="catalytic activity">
    <reaction evidence="1">
        <text>glyoxylate + acetyl-CoA + H2O = (S)-malate + CoA + H(+)</text>
        <dbReference type="Rhea" id="RHEA:18181"/>
        <dbReference type="ChEBI" id="CHEBI:15377"/>
        <dbReference type="ChEBI" id="CHEBI:15378"/>
        <dbReference type="ChEBI" id="CHEBI:15589"/>
        <dbReference type="ChEBI" id="CHEBI:36655"/>
        <dbReference type="ChEBI" id="CHEBI:57287"/>
        <dbReference type="ChEBI" id="CHEBI:57288"/>
        <dbReference type="EC" id="2.3.3.9"/>
    </reaction>
</comment>
<comment type="cofactor">
    <cofactor evidence="1">
        <name>Mg(2+)</name>
        <dbReference type="ChEBI" id="CHEBI:18420"/>
    </cofactor>
</comment>
<comment type="pathway">
    <text evidence="1">Carbohydrate metabolism; glyoxylate cycle; (S)-malate from isocitrate: step 2/2.</text>
</comment>
<comment type="subunit">
    <text evidence="1">Monomer.</text>
</comment>
<comment type="subcellular location">
    <subcellularLocation>
        <location evidence="1">Cytoplasm</location>
    </subcellularLocation>
</comment>
<comment type="similarity">
    <text evidence="1">Belongs to the malate synthase family. GlcB subfamily.</text>
</comment>
<protein>
    <recommendedName>
        <fullName evidence="1">Malate synthase G</fullName>
        <ecNumber evidence="1">2.3.3.9</ecNumber>
    </recommendedName>
</protein>
<sequence>MTDRVSVGNLRIARVLYDFVNNEALPGTDIDPDSFWAGVDKVVADLTPQNQALLNARDELQAQIDKWHRRRVIEPIDMDAYRQFLTEIGYLLPEPDDFTITTSGVDAEITTTAGPQLVVPVLNARFALNAANARWGSLYDALYGTDVIPETDGAEKGPTYNKVRGDKVIAYARKFLDDSVPLSSGSFGDATGFTVQDGQLVVALPDKSTGLANPGQFAGYTGAAESPTSVLLINHGLHIEILIDPESQVGTTDRAGVKDVILESAITTIMDFEDSVAAVDAADKVLGYRNWLGLNKGDLAAAVDKDGTAFLRVLNRDRNYTAPGGGQFTLPGRSLMFVRNVGHLMTNDAIVDTDGSEVFEGIMDALFTGLIAIHGLKASDVNGPLINSRTGSIYIVKPKMHGPAEVAFTCELFSRVEDVLGLPQNTMKIGIMDEERRTTVNLKACIKAAADRVVFINTGFLDRTGDEIHTSMEAGPMVRKGTMKSQPWILAYEDHNVDAGLAAGFSGRAQVGKGMWTMTELMADMVETKIAQPRAGASTAWVPSPTAATLHALHYHQVDVAAVQQGLAGKRRATIEQLLTIPLAKELAWAPDEIREEVDNNCQSILGYVVRWVDQGVGCSKVPDIHDVALMEDRATLRISSQLLANWLRHGVITSADVRASLERMAPLVDRQNAGDVAYRPMAPNFDDSIAFLAAQELILSGAQQPNGYTEPILHRRRREFKARAAEKPAPSDRAGDDAAR</sequence>
<evidence type="ECO:0000255" key="1">
    <source>
        <dbReference type="HAMAP-Rule" id="MF_00641"/>
    </source>
</evidence>
<evidence type="ECO:0000256" key="2">
    <source>
        <dbReference type="SAM" id="MobiDB-lite"/>
    </source>
</evidence>
<organism>
    <name type="scientific">Mycobacterium bovis (strain BCG / Tokyo 172 / ATCC 35737 / TMC 1019)</name>
    <dbReference type="NCBI Taxonomy" id="561275"/>
    <lineage>
        <taxon>Bacteria</taxon>
        <taxon>Bacillati</taxon>
        <taxon>Actinomycetota</taxon>
        <taxon>Actinomycetes</taxon>
        <taxon>Mycobacteriales</taxon>
        <taxon>Mycobacteriaceae</taxon>
        <taxon>Mycobacterium</taxon>
        <taxon>Mycobacterium tuberculosis complex</taxon>
    </lineage>
</organism>
<keyword id="KW-0963">Cytoplasm</keyword>
<keyword id="KW-0329">Glyoxylate bypass</keyword>
<keyword id="KW-0460">Magnesium</keyword>
<keyword id="KW-0479">Metal-binding</keyword>
<keyword id="KW-0558">Oxidation</keyword>
<keyword id="KW-0808">Transferase</keyword>
<keyword id="KW-0816">Tricarboxylic acid cycle</keyword>
<accession>C1APB4</accession>
<feature type="chain" id="PRO_1000147425" description="Malate synthase G">
    <location>
        <begin position="1"/>
        <end position="741"/>
    </location>
</feature>
<feature type="region of interest" description="Disordered" evidence="2">
    <location>
        <begin position="718"/>
        <end position="741"/>
    </location>
</feature>
<feature type="compositionally biased region" description="Basic and acidic residues" evidence="2">
    <location>
        <begin position="722"/>
        <end position="741"/>
    </location>
</feature>
<feature type="active site" description="Proton acceptor" evidence="1">
    <location>
        <position position="339"/>
    </location>
</feature>
<feature type="active site" description="Proton donor" evidence="1">
    <location>
        <position position="633"/>
    </location>
</feature>
<feature type="binding site" evidence="1">
    <location>
        <position position="118"/>
    </location>
    <ligand>
        <name>acetyl-CoA</name>
        <dbReference type="ChEBI" id="CHEBI:57288"/>
    </ligand>
</feature>
<feature type="binding site" evidence="1">
    <location>
        <begin position="125"/>
        <end position="126"/>
    </location>
    <ligand>
        <name>acetyl-CoA</name>
        <dbReference type="ChEBI" id="CHEBI:57288"/>
    </ligand>
</feature>
<feature type="binding site" evidence="1">
    <location>
        <position position="275"/>
    </location>
    <ligand>
        <name>acetyl-CoA</name>
        <dbReference type="ChEBI" id="CHEBI:57288"/>
    </ligand>
</feature>
<feature type="binding site" evidence="1">
    <location>
        <position position="312"/>
    </location>
    <ligand>
        <name>acetyl-CoA</name>
        <dbReference type="ChEBI" id="CHEBI:57288"/>
    </ligand>
</feature>
<feature type="binding site" evidence="1">
    <location>
        <position position="339"/>
    </location>
    <ligand>
        <name>glyoxylate</name>
        <dbReference type="ChEBI" id="CHEBI:36655"/>
    </ligand>
</feature>
<feature type="binding site" evidence="1">
    <location>
        <position position="434"/>
    </location>
    <ligand>
        <name>glyoxylate</name>
        <dbReference type="ChEBI" id="CHEBI:36655"/>
    </ligand>
</feature>
<feature type="binding site" evidence="1">
    <location>
        <position position="434"/>
    </location>
    <ligand>
        <name>Mg(2+)</name>
        <dbReference type="ChEBI" id="CHEBI:18420"/>
    </ligand>
</feature>
<feature type="binding site" evidence="1">
    <location>
        <begin position="459"/>
        <end position="462"/>
    </location>
    <ligand>
        <name>glyoxylate</name>
        <dbReference type="ChEBI" id="CHEBI:36655"/>
    </ligand>
</feature>
<feature type="binding site" evidence="1">
    <location>
        <position position="462"/>
    </location>
    <ligand>
        <name>Mg(2+)</name>
        <dbReference type="ChEBI" id="CHEBI:18420"/>
    </ligand>
</feature>
<feature type="binding site" evidence="1">
    <location>
        <position position="543"/>
    </location>
    <ligand>
        <name>acetyl-CoA</name>
        <dbReference type="ChEBI" id="CHEBI:57288"/>
    </ligand>
</feature>
<feature type="modified residue" description="Cysteine sulfenic acid (-SOH)" evidence="1">
    <location>
        <position position="619"/>
    </location>
</feature>